<organism>
    <name type="scientific">Arabidopsis thaliana</name>
    <name type="common">Mouse-ear cress</name>
    <dbReference type="NCBI Taxonomy" id="3702"/>
    <lineage>
        <taxon>Eukaryota</taxon>
        <taxon>Viridiplantae</taxon>
        <taxon>Streptophyta</taxon>
        <taxon>Embryophyta</taxon>
        <taxon>Tracheophyta</taxon>
        <taxon>Spermatophyta</taxon>
        <taxon>Magnoliopsida</taxon>
        <taxon>eudicotyledons</taxon>
        <taxon>Gunneridae</taxon>
        <taxon>Pentapetalae</taxon>
        <taxon>rosids</taxon>
        <taxon>malvids</taxon>
        <taxon>Brassicales</taxon>
        <taxon>Brassicaceae</taxon>
        <taxon>Camelineae</taxon>
        <taxon>Arabidopsis</taxon>
    </lineage>
</organism>
<proteinExistence type="evidence at protein level"/>
<feature type="signal peptide" evidence="2">
    <location>
        <begin position="1"/>
        <end position="23"/>
    </location>
</feature>
<feature type="chain" id="PRO_5008176503" description="GPI-anchored protein LLG2" evidence="2">
    <location>
        <begin position="24"/>
        <end position="135"/>
    </location>
</feature>
<feature type="propeptide" id="PRO_0000438101" description="Removed in mature form" evidence="2">
    <location>
        <begin position="136"/>
        <end position="163"/>
    </location>
</feature>
<feature type="lipid moiety-binding region" description="GPI-anchor amidated serine" evidence="2">
    <location>
        <position position="135"/>
    </location>
</feature>
<feature type="glycosylation site" description="N-linked (GlcNAc...) asparagine" evidence="3 5 9">
    <location>
        <position position="52"/>
    </location>
</feature>
<feature type="strand" evidence="10">
    <location>
        <begin position="49"/>
        <end position="51"/>
    </location>
</feature>
<feature type="helix" evidence="10">
    <location>
        <begin position="54"/>
        <end position="57"/>
    </location>
</feature>
<feature type="strand" evidence="10">
    <location>
        <begin position="62"/>
        <end position="64"/>
    </location>
</feature>
<feature type="helix" evidence="10">
    <location>
        <begin position="67"/>
        <end position="78"/>
    </location>
</feature>
<feature type="helix" evidence="10">
    <location>
        <begin position="79"/>
        <end position="81"/>
    </location>
</feature>
<feature type="helix" evidence="10">
    <location>
        <begin position="82"/>
        <end position="85"/>
    </location>
</feature>
<feature type="helix" evidence="10">
    <location>
        <begin position="92"/>
        <end position="104"/>
    </location>
</feature>
<feature type="helix" evidence="10">
    <location>
        <begin position="110"/>
        <end position="114"/>
    </location>
</feature>
<dbReference type="EMBL" id="AC006234">
    <property type="protein sequence ID" value="AAD20925.1"/>
    <property type="status" value="ALT_SEQ"/>
    <property type="molecule type" value="Genomic_DNA"/>
</dbReference>
<dbReference type="EMBL" id="CP002685">
    <property type="protein sequence ID" value="AEC07058.1"/>
    <property type="molecule type" value="Genomic_DNA"/>
</dbReference>
<dbReference type="EMBL" id="BT012124">
    <property type="protein sequence ID" value="AAS76219.1"/>
    <property type="molecule type" value="mRNA"/>
</dbReference>
<dbReference type="EMBL" id="BT012380">
    <property type="protein sequence ID" value="AAS88770.1"/>
    <property type="molecule type" value="mRNA"/>
</dbReference>
<dbReference type="PIR" id="C84592">
    <property type="entry name" value="C84592"/>
</dbReference>
<dbReference type="RefSeq" id="NP_179662.2">
    <property type="nucleotide sequence ID" value="NM_127634.4"/>
</dbReference>
<dbReference type="PDB" id="6A5E">
    <property type="method" value="X-ray"/>
    <property type="resolution" value="2.77 A"/>
    <property type="chains" value="C/D=42-125"/>
</dbReference>
<dbReference type="PDBsum" id="6A5E"/>
<dbReference type="SMR" id="Q6NLF4"/>
<dbReference type="FunCoup" id="Q6NLF4">
    <property type="interactions" value="11"/>
</dbReference>
<dbReference type="STRING" id="3702.Q6NLF4"/>
<dbReference type="GlyCosmos" id="Q6NLF4">
    <property type="glycosylation" value="1 site, No reported glycans"/>
</dbReference>
<dbReference type="GlyGen" id="Q6NLF4">
    <property type="glycosylation" value="1 site"/>
</dbReference>
<dbReference type="PaxDb" id="3702-AT2G20700.1"/>
<dbReference type="ProteomicsDB" id="238422"/>
<dbReference type="EnsemblPlants" id="AT2G20700.1">
    <property type="protein sequence ID" value="AT2G20700.1"/>
    <property type="gene ID" value="AT2G20700"/>
</dbReference>
<dbReference type="GeneID" id="816598"/>
<dbReference type="Gramene" id="AT2G20700.1">
    <property type="protein sequence ID" value="AT2G20700.1"/>
    <property type="gene ID" value="AT2G20700"/>
</dbReference>
<dbReference type="KEGG" id="ath:AT2G20700"/>
<dbReference type="Araport" id="AT2G20700"/>
<dbReference type="TAIR" id="AT2G20700">
    <property type="gene designation" value="LLG2"/>
</dbReference>
<dbReference type="eggNOG" id="ENOG502S17V">
    <property type="taxonomic scope" value="Eukaryota"/>
</dbReference>
<dbReference type="HOGENOM" id="CLU_119747_0_0_1"/>
<dbReference type="InParanoid" id="Q6NLF4"/>
<dbReference type="OMA" id="TRTTCKE"/>
<dbReference type="OrthoDB" id="585255at2759"/>
<dbReference type="PhylomeDB" id="Q6NLF4"/>
<dbReference type="PRO" id="PR:Q6NLF4"/>
<dbReference type="Proteomes" id="UP000006548">
    <property type="component" value="Chromosome 2"/>
</dbReference>
<dbReference type="ExpressionAtlas" id="Q6NLF4">
    <property type="expression patterns" value="baseline and differential"/>
</dbReference>
<dbReference type="GO" id="GO:0005886">
    <property type="term" value="C:plasma membrane"/>
    <property type="evidence" value="ECO:0007669"/>
    <property type="project" value="UniProtKB-SubCell"/>
</dbReference>
<dbReference type="GO" id="GO:0090406">
    <property type="term" value="C:pollen tube"/>
    <property type="evidence" value="ECO:0000314"/>
    <property type="project" value="TAIR"/>
</dbReference>
<dbReference type="GO" id="GO:0098552">
    <property type="term" value="C:side of membrane"/>
    <property type="evidence" value="ECO:0007669"/>
    <property type="project" value="UniProtKB-KW"/>
</dbReference>
<dbReference type="GO" id="GO:1903427">
    <property type="term" value="P:negative regulation of reactive oxygen species biosynthetic process"/>
    <property type="evidence" value="ECO:0000316"/>
    <property type="project" value="TAIR"/>
</dbReference>
<dbReference type="InterPro" id="IPR039307">
    <property type="entry name" value="LORELEI-like"/>
</dbReference>
<dbReference type="PANTHER" id="PTHR31533">
    <property type="entry name" value="GPI-ANCHORED PROTEIN LLG1-RELATED-RELATED"/>
    <property type="match status" value="1"/>
</dbReference>
<dbReference type="PANTHER" id="PTHR31533:SF35">
    <property type="entry name" value="GPI-ANCHORED PROTEIN LLG2-RELATED"/>
    <property type="match status" value="1"/>
</dbReference>
<accession>Q6NLF4</accession>
<accession>Q9SKU7</accession>
<sequence length="163" mass="17777">MEISPYCLLSLLPIFLLSGFSLSYDEFDGHAATSRALLQTRTTCKEDFANKNYTIITSRCKGPNYPANVCCSAFKDFACPFAEVLNDEKNDCASTMFSYINLYGRYPPGIFANMCKEGKEGLDCTDVTQSASATSDSIPRASTTASLAVLSTFLVLCLLFLSS</sequence>
<keyword id="KW-0002">3D-structure</keyword>
<keyword id="KW-1003">Cell membrane</keyword>
<keyword id="KW-0325">Glycoprotein</keyword>
<keyword id="KW-0336">GPI-anchor</keyword>
<keyword id="KW-0449">Lipoprotein</keyword>
<keyword id="KW-0472">Membrane</keyword>
<keyword id="KW-1185">Reference proteome</keyword>
<keyword id="KW-0732">Signal</keyword>
<comment type="subcellular location">
    <subcellularLocation>
        <location evidence="1">Cell membrane</location>
        <topology evidence="2">Lipid-anchor</topology>
        <topology evidence="2">GPI-anchor</topology>
    </subcellularLocation>
</comment>
<comment type="tissue specificity">
    <text evidence="4">Expressed in pollen, pollen tubes, sporophytic pistil tissues, in the early stages of female gametophyte development, and in unfertilized, mature ovules.</text>
</comment>
<comment type="disruption phenotype">
    <text evidence="4">No aborted seed phenotype and normal production of seed sets.</text>
</comment>
<comment type="sequence caution" evidence="7">
    <conflict type="erroneous gene model prediction">
        <sequence resource="EMBL-CDS" id="AAD20925"/>
    </conflict>
</comment>
<protein>
    <recommendedName>
        <fullName evidence="7">GPI-anchored protein LLG2</fullName>
    </recommendedName>
    <alternativeName>
        <fullName evidence="6">LORELEI-like-GPI-anchored protein 2</fullName>
    </alternativeName>
</protein>
<reference key="1">
    <citation type="journal article" date="1999" name="Nature">
        <title>Sequence and analysis of chromosome 2 of the plant Arabidopsis thaliana.</title>
        <authorList>
            <person name="Lin X."/>
            <person name="Kaul S."/>
            <person name="Rounsley S.D."/>
            <person name="Shea T.P."/>
            <person name="Benito M.-I."/>
            <person name="Town C.D."/>
            <person name="Fujii C.Y."/>
            <person name="Mason T.M."/>
            <person name="Bowman C.L."/>
            <person name="Barnstead M.E."/>
            <person name="Feldblyum T.V."/>
            <person name="Buell C.R."/>
            <person name="Ketchum K.A."/>
            <person name="Lee J.J."/>
            <person name="Ronning C.M."/>
            <person name="Koo H.L."/>
            <person name="Moffat K.S."/>
            <person name="Cronin L.A."/>
            <person name="Shen M."/>
            <person name="Pai G."/>
            <person name="Van Aken S."/>
            <person name="Umayam L."/>
            <person name="Tallon L.J."/>
            <person name="Gill J.E."/>
            <person name="Adams M.D."/>
            <person name="Carrera A.J."/>
            <person name="Creasy T.H."/>
            <person name="Goodman H.M."/>
            <person name="Somerville C.R."/>
            <person name="Copenhaver G.P."/>
            <person name="Preuss D."/>
            <person name="Nierman W.C."/>
            <person name="White O."/>
            <person name="Eisen J.A."/>
            <person name="Salzberg S.L."/>
            <person name="Fraser C.M."/>
            <person name="Venter J.C."/>
        </authorList>
    </citation>
    <scope>NUCLEOTIDE SEQUENCE [LARGE SCALE GENOMIC DNA]</scope>
    <source>
        <strain>cv. Columbia</strain>
    </source>
</reference>
<reference key="2">
    <citation type="journal article" date="2017" name="Plant J.">
        <title>Araport11: a complete reannotation of the Arabidopsis thaliana reference genome.</title>
        <authorList>
            <person name="Cheng C.Y."/>
            <person name="Krishnakumar V."/>
            <person name="Chan A.P."/>
            <person name="Thibaud-Nissen F."/>
            <person name="Schobel S."/>
            <person name="Town C.D."/>
        </authorList>
    </citation>
    <scope>GENOME REANNOTATION</scope>
    <source>
        <strain>cv. Columbia</strain>
    </source>
</reference>
<reference key="3">
    <citation type="submission" date="2004-04" db="EMBL/GenBank/DDBJ databases">
        <title>Arabidopsis ORF clones.</title>
        <authorList>
            <person name="Shinn P."/>
            <person name="Chen H."/>
            <person name="Cheuk R.F."/>
            <person name="Kim C.J."/>
            <person name="Ecker J.R."/>
        </authorList>
    </citation>
    <scope>NUCLEOTIDE SEQUENCE [LARGE SCALE MRNA]</scope>
    <source>
        <strain>cv. Columbia</strain>
    </source>
</reference>
<reference key="4">
    <citation type="journal article" date="2010" name="Plant J.">
        <title>A role for LORELEI, a putative glycosylphosphatidylinositol-anchored protein, in Arabidopsis thaliana double fertilization and early seed development.</title>
        <authorList>
            <person name="Tsukamoto T."/>
            <person name="Qin Y."/>
            <person name="Huang Y."/>
            <person name="Dunatunga D."/>
            <person name="Palanivelu R."/>
        </authorList>
    </citation>
    <scope>TISSUE SPECIFICITY</scope>
    <scope>DISRUPTION PHENOTYPE</scope>
</reference>
<reference key="5">
    <citation type="submission" date="2018-06" db="PDB data bank">
        <title>Crystal structure of plant peptide RALF23 in complex with FER and LLG2.</title>
        <authorList>
            <person name="Xiao Y."/>
            <person name="Chai J."/>
        </authorList>
    </citation>
    <scope>X-RAY CRYSTALLOGRAPHY (2.77 ANGSTROMS) OF 42-125</scope>
    <scope>GLYCOSYLATION AT ASN-52</scope>
</reference>
<evidence type="ECO:0000250" key="1">
    <source>
        <dbReference type="UniProtKB" id="Q9FKT1"/>
    </source>
</evidence>
<evidence type="ECO:0000255" key="2"/>
<evidence type="ECO:0000255" key="3">
    <source>
        <dbReference type="PROSITE-ProRule" id="PRU00498"/>
    </source>
</evidence>
<evidence type="ECO:0000269" key="4">
    <source>
    </source>
</evidence>
<evidence type="ECO:0000269" key="5">
    <source ref="5"/>
</evidence>
<evidence type="ECO:0000303" key="6">
    <source>
    </source>
</evidence>
<evidence type="ECO:0000305" key="7"/>
<evidence type="ECO:0000312" key="8">
    <source>
        <dbReference type="Araport" id="AT2G20700"/>
    </source>
</evidence>
<evidence type="ECO:0007744" key="9">
    <source>
        <dbReference type="PDB" id="6A5E"/>
    </source>
</evidence>
<evidence type="ECO:0007829" key="10">
    <source>
        <dbReference type="PDB" id="6A5E"/>
    </source>
</evidence>
<gene>
    <name evidence="6" type="primary">LLG2</name>
    <name evidence="8" type="ordered locus">At2g20700</name>
</gene>
<name>LLG2_ARATH</name>